<keyword id="KW-0346">Stress response</keyword>
<proteinExistence type="inferred from homology"/>
<sequence>MKIKAYIPAIAAVILSSNATLANQNQAYNSNHTTSLHQAIELLDNQITNIDNLFKNKLPFYESNSIKSKFITKDKQYIIIMEVPGFDKDHIKIKVNGNKLFVKGNIEDKNKADDSNNYMNKNFNYVISLYEDVDQKNISSSLKNGILTITLPRIEVKEQDAKEIPIN</sequence>
<organism>
    <name type="scientific">Rickettsia bellii (strain RML369-C)</name>
    <dbReference type="NCBI Taxonomy" id="336407"/>
    <lineage>
        <taxon>Bacteria</taxon>
        <taxon>Pseudomonadati</taxon>
        <taxon>Pseudomonadota</taxon>
        <taxon>Alphaproteobacteria</taxon>
        <taxon>Rickettsiales</taxon>
        <taxon>Rickettsiaceae</taxon>
        <taxon>Rickettsieae</taxon>
        <taxon>Rickettsia</taxon>
        <taxon>belli group</taxon>
    </lineage>
</organism>
<feature type="chain" id="PRO_0000288738" description="Small heat shock protein C1">
    <location>
        <begin position="1"/>
        <end position="167"/>
    </location>
</feature>
<feature type="domain" description="sHSP" evidence="1">
    <location>
        <begin position="59"/>
        <end position="167"/>
    </location>
</feature>
<evidence type="ECO:0000255" key="1">
    <source>
        <dbReference type="PROSITE-ProRule" id="PRU00285"/>
    </source>
</evidence>
<protein>
    <recommendedName>
        <fullName>Small heat shock protein C1</fullName>
    </recommendedName>
</protein>
<comment type="similarity">
    <text evidence="1">Belongs to the small heat shock protein (HSP20) family.</text>
</comment>
<gene>
    <name type="primary">hspC1</name>
    <name type="ordered locus">RBE_0837</name>
</gene>
<accession>Q1RI96</accession>
<reference key="1">
    <citation type="journal article" date="2006" name="PLoS Genet.">
        <title>Genome sequence of Rickettsia bellii illuminates the role of amoebae in gene exchanges between intracellular pathogens.</title>
        <authorList>
            <person name="Ogata H."/>
            <person name="La Scola B."/>
            <person name="Audic S."/>
            <person name="Renesto P."/>
            <person name="Blanc G."/>
            <person name="Robert C."/>
            <person name="Fournier P.-E."/>
            <person name="Claverie J.-M."/>
            <person name="Raoult D."/>
        </authorList>
    </citation>
    <scope>NUCLEOTIDE SEQUENCE [LARGE SCALE GENOMIC DNA]</scope>
    <source>
        <strain>RML369-C</strain>
    </source>
</reference>
<dbReference type="EMBL" id="CP000087">
    <property type="protein sequence ID" value="ABE04918.1"/>
    <property type="molecule type" value="Genomic_DNA"/>
</dbReference>
<dbReference type="SMR" id="Q1RI96"/>
<dbReference type="KEGG" id="rbe:RBE_0837"/>
<dbReference type="eggNOG" id="COG0071">
    <property type="taxonomic scope" value="Bacteria"/>
</dbReference>
<dbReference type="HOGENOM" id="CLU_135634_0_0_5"/>
<dbReference type="OrthoDB" id="9808910at2"/>
<dbReference type="Proteomes" id="UP000001951">
    <property type="component" value="Chromosome"/>
</dbReference>
<dbReference type="GO" id="GO:0009408">
    <property type="term" value="P:response to heat"/>
    <property type="evidence" value="ECO:0007669"/>
    <property type="project" value="InterPro"/>
</dbReference>
<dbReference type="CDD" id="cd06464">
    <property type="entry name" value="ACD_sHsps-like"/>
    <property type="match status" value="1"/>
</dbReference>
<dbReference type="Gene3D" id="2.60.40.790">
    <property type="match status" value="1"/>
</dbReference>
<dbReference type="InterPro" id="IPR002068">
    <property type="entry name" value="A-crystallin/Hsp20_dom"/>
</dbReference>
<dbReference type="InterPro" id="IPR008978">
    <property type="entry name" value="HSP20-like_chaperone"/>
</dbReference>
<dbReference type="InterPro" id="IPR044587">
    <property type="entry name" value="HSP21-like"/>
</dbReference>
<dbReference type="PANTHER" id="PTHR46733">
    <property type="entry name" value="26.5 KDA HEAT SHOCK PROTEIN, MITOCHONDRIAL"/>
    <property type="match status" value="1"/>
</dbReference>
<dbReference type="PANTHER" id="PTHR46733:SF4">
    <property type="entry name" value="HEAT SHOCK PROTEIN 21, CHLOROPLASTIC"/>
    <property type="match status" value="1"/>
</dbReference>
<dbReference type="Pfam" id="PF00011">
    <property type="entry name" value="HSP20"/>
    <property type="match status" value="1"/>
</dbReference>
<dbReference type="SUPFAM" id="SSF49764">
    <property type="entry name" value="HSP20-like chaperones"/>
    <property type="match status" value="1"/>
</dbReference>
<dbReference type="PROSITE" id="PS01031">
    <property type="entry name" value="SHSP"/>
    <property type="match status" value="1"/>
</dbReference>
<name>HSPC1_RICBR</name>